<keyword id="KW-0175">Coiled coil</keyword>
<keyword id="KW-0963">Cytoplasm</keyword>
<keyword id="KW-0221">Differentiation</keyword>
<keyword id="KW-0235">DNA replication</keyword>
<keyword id="KW-0469">Meiosis</keyword>
<keyword id="KW-0539">Nucleus</keyword>
<keyword id="KW-0896">Oogenesis</keyword>
<keyword id="KW-0597">Phosphoprotein</keyword>
<keyword id="KW-1185">Reference proteome</keyword>
<keyword id="KW-0744">Spermatogenesis</keyword>
<keyword id="KW-0804">Transcription</keyword>
<keyword id="KW-0805">Transcription regulation</keyword>
<name>STRA8_MOUSE</name>
<feature type="chain" id="PRO_0000318115" description="Stimulated by retinoic acid gene 8 protein">
    <location>
        <begin position="1"/>
        <end position="393"/>
    </location>
</feature>
<feature type="region of interest" description="Disordered" evidence="2">
    <location>
        <begin position="1"/>
        <end position="25"/>
    </location>
</feature>
<feature type="region of interest" description="Disordered" evidence="2">
    <location>
        <begin position="124"/>
        <end position="201"/>
    </location>
</feature>
<feature type="coiled-coil region" evidence="1">
    <location>
        <begin position="66"/>
        <end position="95"/>
    </location>
</feature>
<feature type="short sequence motif" description="Nuclear localization signal (NLS)" evidence="9">
    <location>
        <begin position="28"/>
        <end position="33"/>
    </location>
</feature>
<feature type="short sequence motif" description="Nuclear export signal (NES)" evidence="9">
    <location>
        <begin position="209"/>
        <end position="218"/>
    </location>
</feature>
<feature type="compositionally biased region" description="Polar residues" evidence="2">
    <location>
        <begin position="1"/>
        <end position="11"/>
    </location>
</feature>
<feature type="compositionally biased region" description="Acidic residues" evidence="2">
    <location>
        <begin position="141"/>
        <end position="192"/>
    </location>
</feature>
<feature type="sequence conflict" description="In Ref. 2; AAI00747." evidence="16" ref="2">
    <original>KAVYSQSDITAS</original>
    <variation>SVEGAWFTVVAL</variation>
    <location>
        <begin position="52"/>
        <end position="63"/>
    </location>
</feature>
<gene>
    <name evidence="15 19" type="primary">Stra8</name>
</gene>
<reference evidence="16 18" key="1">
    <citation type="journal article" date="1996" name="J. Cell Biol.">
        <title>Characterization of a premeiotic germ cell-specific cytoplasmic protein encoded by Stra8, a novel retinoic acid-responsive gene.</title>
        <authorList>
            <person name="Oulad-Abdelghani M."/>
            <person name="Bouillet P."/>
            <person name="Decimo D."/>
            <person name="Gansmuller A."/>
            <person name="Heyberger S."/>
            <person name="Dolle P."/>
            <person name="Bronner S."/>
            <person name="Lutz Y."/>
            <person name="Chambon P."/>
        </authorList>
    </citation>
    <scope>NUCLEOTIDE SEQUENCE [MRNA]</scope>
    <scope>SUBCELLULAR LOCATION</scope>
    <scope>TISSUE SPECIFICITY</scope>
    <scope>INDUCTION</scope>
    <scope>PHOSPHORYLATION</scope>
    <source>
        <tissue evidence="18">Embryonic carcinoma</tissue>
    </source>
</reference>
<reference evidence="17" key="2">
    <citation type="journal article" date="2004" name="Genome Res.">
        <title>The status, quality, and expansion of the NIH full-length cDNA project: the Mammalian Gene Collection (MGC).</title>
        <authorList>
            <consortium name="The MGC Project Team"/>
        </authorList>
    </citation>
    <scope>NUCLEOTIDE SEQUENCE [LARGE SCALE MRNA]</scope>
</reference>
<reference evidence="16" key="3">
    <citation type="journal article" date="2003" name="Dev. Biol.">
        <title>Sexual differentiation of germ cells in XX mouse gonads occurs in an anterior-to-posterior wave.</title>
        <authorList>
            <person name="Menke D.B."/>
            <person name="Koubova J."/>
            <person name="Page D.C."/>
        </authorList>
    </citation>
    <scope>DEVELOPMENTAL STAGE</scope>
    <scope>TISSUE SPECIFICITY</scope>
</reference>
<reference evidence="16" key="4">
    <citation type="journal article" date="2006" name="Nat. Genet.">
        <title>In germ cells of mouse embryonic ovaries, the decision to enter meiosis precedes premeiotic DNA replication.</title>
        <authorList>
            <person name="Baltus A.E."/>
            <person name="Menke D.B."/>
            <person name="Hu Y.-C."/>
            <person name="Goodheart M.L."/>
            <person name="Carpenter A.E."/>
            <person name="de Rooij D.G."/>
            <person name="Page D.C."/>
        </authorList>
    </citation>
    <scope>FUNCTION</scope>
    <scope>DISRUPTION PHENOTYPE</scope>
</reference>
<reference evidence="16" key="5">
    <citation type="journal article" date="2006" name="Proc. Natl. Acad. Sci. U.S.A.">
        <title>Retinoic acid regulates sex-specific timing of meiotic initiation in mice.</title>
        <authorList>
            <person name="Koubova J."/>
            <person name="Menke D.B."/>
            <person name="Zhou Q."/>
            <person name="Capel B."/>
            <person name="Griswold M.D."/>
            <person name="Page D.C."/>
        </authorList>
    </citation>
    <scope>FUNCTION</scope>
    <scope>DEVELOPMENTAL STAGE</scope>
    <scope>TISSUE SPECIFICITY</scope>
    <scope>INDUCTION</scope>
</reference>
<reference key="6">
    <citation type="journal article" date="2008" name="Biol. Reprod.">
        <title>Expression of stimulated by retinoic acid gene 8 (Stra8) in spermatogenic cells induced by retinoic acid: an in vivo study in vitamin A-sufficient postnatal murine testes.</title>
        <authorList>
            <person name="Zhou Q."/>
            <person name="Nie R."/>
            <person name="Li Y."/>
            <person name="Friel P."/>
            <person name="Mitchell D."/>
            <person name="Hess R.A."/>
            <person name="Small C."/>
            <person name="Griswold M.D."/>
        </authorList>
    </citation>
    <scope>TISSUE SPECIFICITY</scope>
    <scope>INDUCTION</scope>
</reference>
<reference key="7">
    <citation type="journal article" date="2008" name="Proc. Natl. Acad. Sci. U.S.A.">
        <title>Stra8 and its inducer, retinoic acid, regulate meiotic initiation in both spermatogenesis and oogenesis in mice.</title>
        <authorList>
            <person name="Anderson E.L."/>
            <person name="Baltus A.E."/>
            <person name="Roepers-Gajadien H.L."/>
            <person name="Hassold T.J."/>
            <person name="de Rooij D.G."/>
            <person name="van Pelt A.M."/>
            <person name="Page D.C."/>
        </authorList>
    </citation>
    <scope>FUNCTION</scope>
    <scope>DISRUPTION PHENOTYPE</scope>
</reference>
<reference key="8">
    <citation type="journal article" date="2008" name="J. Cell Sci.">
        <title>STRA8-deficient spermatocytes initiate, but fail to complete, meiosis and undergo premature chromosome condensation.</title>
        <authorList>
            <person name="Mark M."/>
            <person name="Jacobs H."/>
            <person name="Oulad-Abdelghani M."/>
            <person name="Dennefeld C."/>
            <person name="Feret B."/>
            <person name="Vernet N."/>
            <person name="Codreanu C.A."/>
            <person name="Chambon P."/>
            <person name="Ghyselinck N.B."/>
        </authorList>
    </citation>
    <scope>FUNCTION</scope>
    <scope>DISRUPTION PHENOTYPE</scope>
</reference>
<reference key="9">
    <citation type="journal article" date="2009" name="J. Biol. Chem.">
        <title>STRA8 shuttles between nucleus and cytoplasm and displays transcriptional activity.</title>
        <authorList>
            <person name="Tedesco M."/>
            <person name="La Sala G."/>
            <person name="Barbagallo F."/>
            <person name="De Felici M."/>
            <person name="Farini D."/>
        </authorList>
    </citation>
    <scope>SUBCELLULAR LOCATION</scope>
    <scope>FUNCTION</scope>
    <scope>INTERACTION WITH XPO1</scope>
</reference>
<reference key="10">
    <citation type="journal article" date="2010" name="Dev. Cell">
        <title>The mammalian doublesex homolog DMRT1 is a transcriptional gatekeeper that controls the mitosis versus meiosis decision in male germ cells.</title>
        <authorList>
            <person name="Matson C.K."/>
            <person name="Murphy M.W."/>
            <person name="Griswold M.D."/>
            <person name="Yoshida S."/>
            <person name="Bardwell V.J."/>
            <person name="Zarkower D."/>
        </authorList>
    </citation>
    <scope>INDUCTION</scope>
</reference>
<reference key="11">
    <citation type="journal article" date="2015" name="Proc. Natl. Acad. Sci. U.S.A.">
        <title>Periodic retinoic acid-STRA8 signaling intersects with periodic germ-cell competencies to regulate spermatogenesis.</title>
        <authorList>
            <person name="Endo T."/>
            <person name="Romer K.A."/>
            <person name="Anderson E.L."/>
            <person name="Baltus A.E."/>
            <person name="de Rooij D.G."/>
            <person name="Page D.C."/>
        </authorList>
    </citation>
    <scope>FUNCTION</scope>
    <scope>TISSUE SPECIFICITY</scope>
</reference>
<reference key="12">
    <citation type="journal article" date="2020" name="Dev. Cell">
        <title>MEIOSIN Directs the Switch from Mitosis to Meiosis in Mammalian Germ Cells.</title>
        <authorList>
            <person name="Ishiguro K.I."/>
            <person name="Matsuura K."/>
            <person name="Tani N."/>
            <person name="Takeda N."/>
            <person name="Usuki S."/>
            <person name="Yamane M."/>
            <person name="Sugimoto M."/>
            <person name="Fujimura S."/>
            <person name="Hosokawa M."/>
            <person name="Chuma S."/>
            <person name="Ko M.S.H."/>
            <person name="Araki K."/>
            <person name="Niwa H."/>
        </authorList>
    </citation>
    <scope>FUNCTION</scope>
    <scope>INTERACTION WITH MEIOSIN</scope>
    <scope>TISSUE SPECIFICITY</scope>
    <scope>DEVELOPMENTAL STAGE</scope>
    <scope>SUBCELLULAR LOCATION</scope>
</reference>
<reference key="13">
    <citation type="journal article" date="2020" name="Science">
        <title>ZGLP1 is a determinant for the oogenic fate in mice.</title>
        <authorList>
            <person name="Nagaoka S.I."/>
            <person name="Nakaki F."/>
            <person name="Miyauchi H."/>
            <person name="Nosaka Y."/>
            <person name="Ohta H."/>
            <person name="Yabuta Y."/>
            <person name="Kurimoto K."/>
            <person name="Hayashi K."/>
            <person name="Nakamura T."/>
            <person name="Yamamoto T."/>
            <person name="Saitou M."/>
        </authorList>
    </citation>
    <scope>FUNCTION</scope>
</reference>
<sequence length="393" mass="44555">MATPGEGNQPSDDGAPQPLAQLQKLEPRVVRRRLSQARHRATLVGLFNNLRKAVYSQSDITASKWQVLNRTKIHIQEQEESLDKLLKLKASFNLQDGNPNSLEEVKEEYARMYSENDSVFLNSFLQDSPPEWFPSEAVGPDAEEEGEEEGEEEGEEGEEEEEGDEEGEEEEENGEEREVEEYQEEEEEEEEEEKKVDLSHSSSTLLPDLMEFERYLNFYKQTMDLLTMNSIISAHEVTLPIVSAAISHLWQTLSEEKKARLLQVWEQQHSAFADLTEACLELAGVEGSMKDSGVDSQGASCSLESTPEEILFEDAFDVASFLDKSEAQHMSNISAMFATCNSENPEEKFQLYIQIIEFFKSLGCVNTPLNQEPEPPDDDDAMLLKCLETFDDL</sequence>
<accession>P70278</accession>
<accession>Q496Q5</accession>
<proteinExistence type="evidence at protein level"/>
<evidence type="ECO:0000255" key="1"/>
<evidence type="ECO:0000256" key="2">
    <source>
        <dbReference type="SAM" id="MobiDB-lite"/>
    </source>
</evidence>
<evidence type="ECO:0000269" key="3">
    <source>
    </source>
</evidence>
<evidence type="ECO:0000269" key="4">
    <source>
    </source>
</evidence>
<evidence type="ECO:0000269" key="5">
    <source>
    </source>
</evidence>
<evidence type="ECO:0000269" key="6">
    <source>
    </source>
</evidence>
<evidence type="ECO:0000269" key="7">
    <source>
    </source>
</evidence>
<evidence type="ECO:0000269" key="8">
    <source>
    </source>
</evidence>
<evidence type="ECO:0000269" key="9">
    <source>
    </source>
</evidence>
<evidence type="ECO:0000269" key="10">
    <source>
    </source>
</evidence>
<evidence type="ECO:0000269" key="11">
    <source>
    </source>
</evidence>
<evidence type="ECO:0000269" key="12">
    <source>
    </source>
</evidence>
<evidence type="ECO:0000269" key="13">
    <source>
    </source>
</evidence>
<evidence type="ECO:0000269" key="14">
    <source>
    </source>
</evidence>
<evidence type="ECO:0000303" key="15">
    <source>
    </source>
</evidence>
<evidence type="ECO:0000305" key="16"/>
<evidence type="ECO:0000312" key="17">
    <source>
        <dbReference type="EMBL" id="AAI03591.1"/>
    </source>
</evidence>
<evidence type="ECO:0000312" key="18">
    <source>
        <dbReference type="EMBL" id="CAA99711.1"/>
    </source>
</evidence>
<evidence type="ECO:0000312" key="19">
    <source>
        <dbReference type="MGI" id="MGI:107917"/>
    </source>
</evidence>
<comment type="function">
    <text evidence="4 5 7 8 9 11 12 13">Meiosis-inducer required for the transition into meiosis for both female and male germ cells (PubMed:16461896, PubMed:17115059, PubMed:18799751, PubMed:18799790, PubMed:19805549, PubMed:32032549, PubMed:32054698). In female germ cells, acts downstream of ZGLP1 as a key effector of the meiotic program: required for premeiotic DNA replication and subsequent events in meiotic prophase (PubMed:16461896, PubMed:17115059, PubMed:18799751, PubMed:18799790, PubMed:32054698). During spermatogenesis, next to its role in meiotic initiation, promotes (but is not required for) spermatogonial differentiation (PubMed:25902548). In complex with MEIOSIN, directly activates the transcription of a subset of critical meiotic genes playing a central role in cell-cycle switching from mitosis to meiosis (PubMed:19805549, PubMed:32032549).</text>
</comment>
<comment type="subunit">
    <text evidence="9 12">Interacts with XPO1. Interacts with MEIOSIN (PubMed:32032549).</text>
</comment>
<comment type="interaction">
    <interactant intactId="EBI-6394115">
        <id>P70278</id>
    </interactant>
    <interactant intactId="EBI-6394082">
        <id>A2CG63</id>
        <label>Arid4b</label>
    </interactant>
    <organismsDiffer>false</organismsDiffer>
    <experiments>4</experiments>
</comment>
<comment type="subcellular location">
    <subcellularLocation>
        <location evidence="9 12 14">Cytoplasm</location>
    </subcellularLocation>
    <subcellularLocation>
        <location evidence="9 12">Nucleus</location>
    </subcellularLocation>
    <text evidence="9">Shuttles between nucleus and cytoplasm (PubMed:19805549). Nuclear export is XPO1-dependent (PubMed:19805549).</text>
</comment>
<comment type="tissue specificity">
    <text evidence="4 8 11 12 14">Expressed exclusively in premeiotic germ cells in both sexes. In females, is expressed in the embryonic ovary. In males, is expressed in pubertal and adult testes, in premeiotic spermatogenic cells. Expressed by some type A and B spermatogonia, preleptotene spermatocytes, and early leptotene spermatocytes (at protein level). Expression begins in late undifferentiated spermatogonia and persists during differentiating spermatogonia (at protein level).</text>
</comment>
<comment type="developmental stage">
    <text evidence="3 4 12">Up-regulated in embryonic germ cells of the female gonads in an anterior-to-posterior wave from 12.5 dpc to 16.5 dpc. In male gonads, expression is first detected after birth.</text>
</comment>
<comment type="induction">
    <text evidence="4 6 10 14">Up-regulated by retinoic acid in embryonic ovaries and adult testes, and by all-trans and 9-cis retinoic acid in P19 embryonic carcinoma (EC) cells. Transcription is repressed by DMRT1 in undifferentiated spermatogonia.</text>
</comment>
<comment type="PTM">
    <text evidence="14">Phosphorylated in P19 EC cells.</text>
</comment>
<comment type="disruption phenotype">
    <text evidence="5 7 8">Female and male mice are infertile due to severe gametogenesis impairment. In female mutant embryos, the initial mitotic development of germ cells is normal, but they fail to undergo promeiotic DNA replication and meiotic chromosome condensation. In male mutants, the premeiotic DNA replication is conserved and germ cells are able to partly condense chromosomes and initiate meiotic recombination. However, they fail to regularily continue over the leptotene stage of prophase I.</text>
</comment>
<dbReference type="EMBL" id="Z75287">
    <property type="protein sequence ID" value="CAA99711.1"/>
    <property type="molecule type" value="mRNA"/>
</dbReference>
<dbReference type="EMBL" id="BC100746">
    <property type="protein sequence ID" value="AAI00747.1"/>
    <property type="molecule type" value="mRNA"/>
</dbReference>
<dbReference type="EMBL" id="BC103590">
    <property type="protein sequence ID" value="AAI03591.1"/>
    <property type="molecule type" value="mRNA"/>
</dbReference>
<dbReference type="EMBL" id="BC103591">
    <property type="protein sequence ID" value="AAI03592.1"/>
    <property type="molecule type" value="mRNA"/>
</dbReference>
<dbReference type="CCDS" id="CCDS39458.1"/>
<dbReference type="RefSeq" id="NP_033318.1">
    <property type="nucleotide sequence ID" value="NM_009292.3"/>
</dbReference>
<dbReference type="RefSeq" id="XP_011239572.1">
    <property type="nucleotide sequence ID" value="XM_011241270.1"/>
</dbReference>
<dbReference type="SMR" id="P70278"/>
<dbReference type="BioGRID" id="203556">
    <property type="interactions" value="2"/>
</dbReference>
<dbReference type="FunCoup" id="P70278">
    <property type="interactions" value="1090"/>
</dbReference>
<dbReference type="IntAct" id="P70278">
    <property type="interactions" value="6"/>
</dbReference>
<dbReference type="STRING" id="10090.ENSMUSP00000031876"/>
<dbReference type="GlyGen" id="P70278">
    <property type="glycosylation" value="1 site"/>
</dbReference>
<dbReference type="iPTMnet" id="P70278"/>
<dbReference type="PhosphoSitePlus" id="P70278"/>
<dbReference type="jPOST" id="P70278"/>
<dbReference type="PaxDb" id="10090-ENSMUSP00000031876"/>
<dbReference type="ProteomicsDB" id="258665"/>
<dbReference type="Antibodypedia" id="53744">
    <property type="antibodies" value="177 antibodies from 26 providers"/>
</dbReference>
<dbReference type="DNASU" id="20899"/>
<dbReference type="Ensembl" id="ENSMUST00000031876.12">
    <property type="protein sequence ID" value="ENSMUSP00000031876.5"/>
    <property type="gene ID" value="ENSMUSG00000029848.12"/>
</dbReference>
<dbReference type="Ensembl" id="ENSMUST00000114999.8">
    <property type="protein sequence ID" value="ENSMUSP00000110651.2"/>
    <property type="gene ID" value="ENSMUSG00000029848.12"/>
</dbReference>
<dbReference type="GeneID" id="20899"/>
<dbReference type="KEGG" id="mmu:20899"/>
<dbReference type="UCSC" id="uc009bia.1">
    <property type="organism name" value="mouse"/>
</dbReference>
<dbReference type="AGR" id="MGI:107917"/>
<dbReference type="CTD" id="346673"/>
<dbReference type="MGI" id="MGI:107917">
    <property type="gene designation" value="Stra8"/>
</dbReference>
<dbReference type="VEuPathDB" id="HostDB:ENSMUSG00000029848"/>
<dbReference type="eggNOG" id="ENOG502RT8C">
    <property type="taxonomic scope" value="Eukaryota"/>
</dbReference>
<dbReference type="GeneTree" id="ENSGT00390000017181"/>
<dbReference type="HOGENOM" id="CLU_049039_0_0_1"/>
<dbReference type="InParanoid" id="P70278"/>
<dbReference type="OMA" id="YMQIIEF"/>
<dbReference type="OrthoDB" id="10043438at2759"/>
<dbReference type="PhylomeDB" id="P70278"/>
<dbReference type="TreeFam" id="TF335594"/>
<dbReference type="BioGRID-ORCS" id="20899">
    <property type="hits" value="1 hit in 77 CRISPR screens"/>
</dbReference>
<dbReference type="PRO" id="PR:P70278"/>
<dbReference type="Proteomes" id="UP000000589">
    <property type="component" value="Chromosome 6"/>
</dbReference>
<dbReference type="RNAct" id="P70278">
    <property type="molecule type" value="protein"/>
</dbReference>
<dbReference type="Bgee" id="ENSMUSG00000029848">
    <property type="expression patterns" value="Expressed in spermatogonium and 34 other cell types or tissues"/>
</dbReference>
<dbReference type="ExpressionAtlas" id="P70278">
    <property type="expression patterns" value="baseline and differential"/>
</dbReference>
<dbReference type="GO" id="GO:0005737">
    <property type="term" value="C:cytoplasm"/>
    <property type="evidence" value="ECO:0000314"/>
    <property type="project" value="UniProtKB"/>
</dbReference>
<dbReference type="GO" id="GO:0001673">
    <property type="term" value="C:male germ cell nucleus"/>
    <property type="evidence" value="ECO:0000314"/>
    <property type="project" value="MGI"/>
</dbReference>
<dbReference type="GO" id="GO:0005634">
    <property type="term" value="C:nucleus"/>
    <property type="evidence" value="ECO:0000314"/>
    <property type="project" value="UniProtKB"/>
</dbReference>
<dbReference type="GO" id="GO:0090427">
    <property type="term" value="P:activation of meiosis"/>
    <property type="evidence" value="ECO:0000315"/>
    <property type="project" value="UniProtKB"/>
</dbReference>
<dbReference type="GO" id="GO:0071300">
    <property type="term" value="P:cellular response to retinoic acid"/>
    <property type="evidence" value="ECO:0000315"/>
    <property type="project" value="UniProtKB"/>
</dbReference>
<dbReference type="GO" id="GO:0006260">
    <property type="term" value="P:DNA replication"/>
    <property type="evidence" value="ECO:0007669"/>
    <property type="project" value="UniProtKB-KW"/>
</dbReference>
<dbReference type="GO" id="GO:0048133">
    <property type="term" value="P:male germ-line stem cell asymmetric division"/>
    <property type="evidence" value="ECO:0000315"/>
    <property type="project" value="UniProtKB"/>
</dbReference>
<dbReference type="GO" id="GO:0051321">
    <property type="term" value="P:meiotic cell cycle"/>
    <property type="evidence" value="ECO:0000315"/>
    <property type="project" value="UniProtKB"/>
</dbReference>
<dbReference type="GO" id="GO:0048477">
    <property type="term" value="P:oogenesis"/>
    <property type="evidence" value="ECO:0000315"/>
    <property type="project" value="UniProtKB"/>
</dbReference>
<dbReference type="GO" id="GO:0045944">
    <property type="term" value="P:positive regulation of transcription by RNA polymerase II"/>
    <property type="evidence" value="ECO:0000314"/>
    <property type="project" value="UniProtKB"/>
</dbReference>
<dbReference type="GO" id="GO:0006357">
    <property type="term" value="P:regulation of transcription by RNA polymerase II"/>
    <property type="evidence" value="ECO:0000315"/>
    <property type="project" value="UniProtKB"/>
</dbReference>
<dbReference type="GO" id="GO:0007283">
    <property type="term" value="P:spermatogenesis"/>
    <property type="evidence" value="ECO:0000315"/>
    <property type="project" value="UniProtKB"/>
</dbReference>
<dbReference type="InterPro" id="IPR057021">
    <property type="entry name" value="bHLH_STRA8"/>
</dbReference>
<dbReference type="InterPro" id="IPR033537">
    <property type="entry name" value="Stra8"/>
</dbReference>
<dbReference type="PANTHER" id="PTHR35254">
    <property type="entry name" value="STIMULATED BY RETINOIC ACID GENE 8 PROTEIN HOMOLOG"/>
    <property type="match status" value="1"/>
</dbReference>
<dbReference type="PANTHER" id="PTHR35254:SF1">
    <property type="entry name" value="STIMULATED BY RETINOIC ACID GENE 8 PROTEIN HOMOLOG"/>
    <property type="match status" value="1"/>
</dbReference>
<dbReference type="Pfam" id="PF23175">
    <property type="entry name" value="bHLH_STRA8"/>
    <property type="match status" value="1"/>
</dbReference>
<protein>
    <recommendedName>
        <fullName evidence="15">Stimulated by retinoic acid gene 8 protein</fullName>
    </recommendedName>
</protein>
<organism>
    <name type="scientific">Mus musculus</name>
    <name type="common">Mouse</name>
    <dbReference type="NCBI Taxonomy" id="10090"/>
    <lineage>
        <taxon>Eukaryota</taxon>
        <taxon>Metazoa</taxon>
        <taxon>Chordata</taxon>
        <taxon>Craniata</taxon>
        <taxon>Vertebrata</taxon>
        <taxon>Euteleostomi</taxon>
        <taxon>Mammalia</taxon>
        <taxon>Eutheria</taxon>
        <taxon>Euarchontoglires</taxon>
        <taxon>Glires</taxon>
        <taxon>Rodentia</taxon>
        <taxon>Myomorpha</taxon>
        <taxon>Muroidea</taxon>
        <taxon>Muridae</taxon>
        <taxon>Murinae</taxon>
        <taxon>Mus</taxon>
        <taxon>Mus</taxon>
    </lineage>
</organism>